<dbReference type="EC" id="3.5.1.5" evidence="1"/>
<dbReference type="EMBL" id="U33011">
    <property type="protein sequence ID" value="AAC43475.1"/>
    <property type="molecule type" value="Genomic_DNA"/>
</dbReference>
<dbReference type="EMBL" id="L41141">
    <property type="protein sequence ID" value="AAC37007.1"/>
    <property type="molecule type" value="Genomic_DNA"/>
</dbReference>
<dbReference type="EMBL" id="AL123456">
    <property type="protein sequence ID" value="CCP44616.1"/>
    <property type="molecule type" value="Genomic_DNA"/>
</dbReference>
<dbReference type="PIR" id="B70665">
    <property type="entry name" value="B70665"/>
</dbReference>
<dbReference type="RefSeq" id="NP_216366.1">
    <property type="nucleotide sequence ID" value="NC_000962.3"/>
</dbReference>
<dbReference type="RefSeq" id="WP_003899049.1">
    <property type="nucleotide sequence ID" value="NZ_NVQJ01000013.1"/>
</dbReference>
<dbReference type="SMR" id="P9WFF1"/>
<dbReference type="FunCoup" id="P9WFF1">
    <property type="interactions" value="79"/>
</dbReference>
<dbReference type="STRING" id="83332.Rv1850"/>
<dbReference type="MEROPS" id="M38.982"/>
<dbReference type="PaxDb" id="83332-Rv1850"/>
<dbReference type="DNASU" id="885359"/>
<dbReference type="GeneID" id="885359"/>
<dbReference type="KEGG" id="mtu:Rv1850"/>
<dbReference type="KEGG" id="mtv:RVBD_1850"/>
<dbReference type="TubercuList" id="Rv1850"/>
<dbReference type="eggNOG" id="COG0804">
    <property type="taxonomic scope" value="Bacteria"/>
</dbReference>
<dbReference type="InParanoid" id="P9WFF1"/>
<dbReference type="OrthoDB" id="9802793at2"/>
<dbReference type="PhylomeDB" id="P9WFF1"/>
<dbReference type="UniPathway" id="UPA00258">
    <property type="reaction ID" value="UER00370"/>
</dbReference>
<dbReference type="Proteomes" id="UP000001584">
    <property type="component" value="Chromosome"/>
</dbReference>
<dbReference type="GO" id="GO:0005737">
    <property type="term" value="C:cytoplasm"/>
    <property type="evidence" value="ECO:0007669"/>
    <property type="project" value="UniProtKB-SubCell"/>
</dbReference>
<dbReference type="GO" id="GO:0016151">
    <property type="term" value="F:nickel cation binding"/>
    <property type="evidence" value="ECO:0007669"/>
    <property type="project" value="UniProtKB-UniRule"/>
</dbReference>
<dbReference type="GO" id="GO:0009039">
    <property type="term" value="F:urease activity"/>
    <property type="evidence" value="ECO:0007669"/>
    <property type="project" value="UniProtKB-UniRule"/>
</dbReference>
<dbReference type="GO" id="GO:0043419">
    <property type="term" value="P:urea catabolic process"/>
    <property type="evidence" value="ECO:0007669"/>
    <property type="project" value="UniProtKB-UniRule"/>
</dbReference>
<dbReference type="CDD" id="cd00375">
    <property type="entry name" value="Urease_alpha"/>
    <property type="match status" value="1"/>
</dbReference>
<dbReference type="Gene3D" id="3.20.20.140">
    <property type="entry name" value="Metal-dependent hydrolases"/>
    <property type="match status" value="1"/>
</dbReference>
<dbReference type="Gene3D" id="2.30.40.10">
    <property type="entry name" value="Urease, subunit C, domain 1"/>
    <property type="match status" value="1"/>
</dbReference>
<dbReference type="HAMAP" id="MF_01953">
    <property type="entry name" value="Urease_alpha"/>
    <property type="match status" value="1"/>
</dbReference>
<dbReference type="InterPro" id="IPR006680">
    <property type="entry name" value="Amidohydro-rel"/>
</dbReference>
<dbReference type="InterPro" id="IPR011059">
    <property type="entry name" value="Metal-dep_hydrolase_composite"/>
</dbReference>
<dbReference type="InterPro" id="IPR032466">
    <property type="entry name" value="Metal_Hydrolase"/>
</dbReference>
<dbReference type="InterPro" id="IPR011612">
    <property type="entry name" value="Urease_alpha_N_dom"/>
</dbReference>
<dbReference type="InterPro" id="IPR050112">
    <property type="entry name" value="Urease_alpha_subunit"/>
</dbReference>
<dbReference type="InterPro" id="IPR017950">
    <property type="entry name" value="Urease_AS"/>
</dbReference>
<dbReference type="InterPro" id="IPR005848">
    <property type="entry name" value="Urease_asu"/>
</dbReference>
<dbReference type="InterPro" id="IPR017951">
    <property type="entry name" value="Urease_asu_c"/>
</dbReference>
<dbReference type="InterPro" id="IPR029754">
    <property type="entry name" value="Urease_Ni-bd"/>
</dbReference>
<dbReference type="NCBIfam" id="NF009685">
    <property type="entry name" value="PRK13206.1"/>
    <property type="match status" value="1"/>
</dbReference>
<dbReference type="NCBIfam" id="NF009686">
    <property type="entry name" value="PRK13207.1"/>
    <property type="match status" value="1"/>
</dbReference>
<dbReference type="NCBIfam" id="TIGR01792">
    <property type="entry name" value="urease_alph"/>
    <property type="match status" value="1"/>
</dbReference>
<dbReference type="PANTHER" id="PTHR43440">
    <property type="entry name" value="UREASE"/>
    <property type="match status" value="1"/>
</dbReference>
<dbReference type="PANTHER" id="PTHR43440:SF1">
    <property type="entry name" value="UREASE"/>
    <property type="match status" value="1"/>
</dbReference>
<dbReference type="Pfam" id="PF01979">
    <property type="entry name" value="Amidohydro_1"/>
    <property type="match status" value="1"/>
</dbReference>
<dbReference type="Pfam" id="PF00449">
    <property type="entry name" value="Urease_alpha"/>
    <property type="match status" value="1"/>
</dbReference>
<dbReference type="PRINTS" id="PR01752">
    <property type="entry name" value="UREASE"/>
</dbReference>
<dbReference type="SUPFAM" id="SSF51338">
    <property type="entry name" value="Composite domain of metallo-dependent hydrolases"/>
    <property type="match status" value="2"/>
</dbReference>
<dbReference type="SUPFAM" id="SSF51556">
    <property type="entry name" value="Metallo-dependent hydrolases"/>
    <property type="match status" value="1"/>
</dbReference>
<dbReference type="PROSITE" id="PS01120">
    <property type="entry name" value="UREASE_1"/>
    <property type="match status" value="1"/>
</dbReference>
<dbReference type="PROSITE" id="PS00145">
    <property type="entry name" value="UREASE_2"/>
    <property type="match status" value="1"/>
</dbReference>
<dbReference type="PROSITE" id="PS51368">
    <property type="entry name" value="UREASE_3"/>
    <property type="match status" value="1"/>
</dbReference>
<evidence type="ECO:0000255" key="1">
    <source>
        <dbReference type="HAMAP-Rule" id="MF_01953"/>
    </source>
</evidence>
<evidence type="ECO:0000269" key="2">
    <source>
    </source>
</evidence>
<evidence type="ECO:0000305" key="3"/>
<protein>
    <recommendedName>
        <fullName evidence="1">Urease subunit alpha</fullName>
        <ecNumber evidence="1">3.5.1.5</ecNumber>
    </recommendedName>
    <alternativeName>
        <fullName evidence="1">Urea amidohydrolase subunit alpha</fullName>
    </alternativeName>
</protein>
<accession>P9WFF1</accession>
<accession>L0T9F6</accession>
<accession>P0A660</accession>
<accession>P50042</accession>
<organism>
    <name type="scientific">Mycobacterium tuberculosis (strain ATCC 25618 / H37Rv)</name>
    <dbReference type="NCBI Taxonomy" id="83332"/>
    <lineage>
        <taxon>Bacteria</taxon>
        <taxon>Bacillati</taxon>
        <taxon>Actinomycetota</taxon>
        <taxon>Actinomycetes</taxon>
        <taxon>Mycobacteriales</taxon>
        <taxon>Mycobacteriaceae</taxon>
        <taxon>Mycobacterium</taxon>
        <taxon>Mycobacterium tuberculosis complex</taxon>
    </lineage>
</organism>
<keyword id="KW-0963">Cytoplasm</keyword>
<keyword id="KW-0903">Direct protein sequencing</keyword>
<keyword id="KW-0378">Hydrolase</keyword>
<keyword id="KW-0479">Metal-binding</keyword>
<keyword id="KW-0533">Nickel</keyword>
<keyword id="KW-1185">Reference proteome</keyword>
<name>URE1_MYCTU</name>
<proteinExistence type="evidence at protein level"/>
<reference key="1">
    <citation type="journal article" date="1995" name="J. Bacteriol.">
        <title>Purification, characterization, and genetic analysis of Mycobacterium tuberculosis urease, a potentially critical determinant of host-pathogen interaction.</title>
        <authorList>
            <person name="Clemens D.L."/>
            <person name="Lee B.-Y."/>
            <person name="Horwitz M.A."/>
        </authorList>
    </citation>
    <scope>NUCLEOTIDE SEQUENCE [GENOMIC DNA]</scope>
    <scope>PROTEIN SEQUENCE OF 2-28</scope>
    <scope>CATALYTIC ACTIVITY</scope>
    <scope>COFACTOR</scope>
    <scope>INTERACTION WITH UREA AND UREB</scope>
    <scope>BIOPHYSICOCHEMICAL PROPERTIES</scope>
    <source>
        <strain>ATCC 35801 / TMC 107 / Erdman</strain>
    </source>
</reference>
<reference key="2">
    <citation type="journal article" date="1995" name="Proc. Natl. Acad. Sci. U.S.A.">
        <title>The urease locus of Mycobacterium tuberculosis and its utilization for the demonstration of allelic exchange in Mycobacterium bovis bacillus Calmette-Guerin.</title>
        <authorList>
            <person name="Reyrat J.-M."/>
            <person name="Berthet F.-X."/>
            <person name="Gicquel B."/>
        </authorList>
    </citation>
    <scope>NUCLEOTIDE SEQUENCE [GENOMIC DNA]</scope>
    <source>
        <strain>ATCC 25618 / H37Rv</strain>
    </source>
</reference>
<reference key="3">
    <citation type="journal article" date="1998" name="Nature">
        <title>Deciphering the biology of Mycobacterium tuberculosis from the complete genome sequence.</title>
        <authorList>
            <person name="Cole S.T."/>
            <person name="Brosch R."/>
            <person name="Parkhill J."/>
            <person name="Garnier T."/>
            <person name="Churcher C.M."/>
            <person name="Harris D.E."/>
            <person name="Gordon S.V."/>
            <person name="Eiglmeier K."/>
            <person name="Gas S."/>
            <person name="Barry C.E. III"/>
            <person name="Tekaia F."/>
            <person name="Badcock K."/>
            <person name="Basham D."/>
            <person name="Brown D."/>
            <person name="Chillingworth T."/>
            <person name="Connor R."/>
            <person name="Davies R.M."/>
            <person name="Devlin K."/>
            <person name="Feltwell T."/>
            <person name="Gentles S."/>
            <person name="Hamlin N."/>
            <person name="Holroyd S."/>
            <person name="Hornsby T."/>
            <person name="Jagels K."/>
            <person name="Krogh A."/>
            <person name="McLean J."/>
            <person name="Moule S."/>
            <person name="Murphy L.D."/>
            <person name="Oliver S."/>
            <person name="Osborne J."/>
            <person name="Quail M.A."/>
            <person name="Rajandream M.A."/>
            <person name="Rogers J."/>
            <person name="Rutter S."/>
            <person name="Seeger K."/>
            <person name="Skelton S."/>
            <person name="Squares S."/>
            <person name="Squares R."/>
            <person name="Sulston J.E."/>
            <person name="Taylor K."/>
            <person name="Whitehead S."/>
            <person name="Barrell B.G."/>
        </authorList>
    </citation>
    <scope>NUCLEOTIDE SEQUENCE [LARGE SCALE GENOMIC DNA]</scope>
    <source>
        <strain>ATCC 25618 / H37Rv</strain>
    </source>
</reference>
<reference key="4">
    <citation type="journal article" date="2008" name="BMC Syst. Biol.">
        <title>targetTB: a target identification pipeline for Mycobacterium tuberculosis through an interactome, reactome and genome-scale structural analysis.</title>
        <authorList>
            <person name="Raman K."/>
            <person name="Yeturu K."/>
            <person name="Chandra N."/>
        </authorList>
    </citation>
    <scope>IDENTIFICATION AS A DRUG TARGET [LARGE SCALE ANALYSIS]</scope>
</reference>
<reference key="5">
    <citation type="journal article" date="2011" name="Mol. Cell. Proteomics">
        <title>Proteogenomic analysis of Mycobacterium tuberculosis by high resolution mass spectrometry.</title>
        <authorList>
            <person name="Kelkar D.S."/>
            <person name="Kumar D."/>
            <person name="Kumar P."/>
            <person name="Balakrishnan L."/>
            <person name="Muthusamy B."/>
            <person name="Yadav A.K."/>
            <person name="Shrivastava P."/>
            <person name="Marimuthu A."/>
            <person name="Anand S."/>
            <person name="Sundaram H."/>
            <person name="Kingsbury R."/>
            <person name="Harsha H.C."/>
            <person name="Nair B."/>
            <person name="Prasad T.S."/>
            <person name="Chauhan D.S."/>
            <person name="Katoch K."/>
            <person name="Katoch V.M."/>
            <person name="Kumar P."/>
            <person name="Chaerkady R."/>
            <person name="Ramachandran S."/>
            <person name="Dash D."/>
            <person name="Pandey A."/>
        </authorList>
    </citation>
    <scope>IDENTIFICATION BY MASS SPECTROMETRY [LARGE SCALE ANALYSIS]</scope>
    <source>
        <strain>ATCC 25618 / H37Rv</strain>
    </source>
</reference>
<comment type="catalytic activity">
    <reaction evidence="1 2">
        <text>urea + 2 H2O + H(+) = hydrogencarbonate + 2 NH4(+)</text>
        <dbReference type="Rhea" id="RHEA:20557"/>
        <dbReference type="ChEBI" id="CHEBI:15377"/>
        <dbReference type="ChEBI" id="CHEBI:15378"/>
        <dbReference type="ChEBI" id="CHEBI:16199"/>
        <dbReference type="ChEBI" id="CHEBI:17544"/>
        <dbReference type="ChEBI" id="CHEBI:28938"/>
        <dbReference type="EC" id="3.5.1.5"/>
    </reaction>
</comment>
<comment type="cofactor">
    <cofactor evidence="1 2">
        <name>Ni cation</name>
        <dbReference type="ChEBI" id="CHEBI:25516"/>
    </cofactor>
    <text evidence="1 2">Binds 2 nickel ions per subunit.</text>
</comment>
<comment type="biophysicochemical properties">
    <kinetics>
        <KM evidence="2">0.3 mM for urea</KM>
        <Vmax evidence="2">0.05 mmol/min/mg enzyme</Vmax>
    </kinetics>
    <phDependence>
        <text evidence="2">Optimum pH is 7.2.</text>
    </phDependence>
</comment>
<comment type="pathway">
    <text evidence="1">Nitrogen metabolism; urea degradation; CO(2) and NH(3) from urea (urease route): step 1/1.</text>
</comment>
<comment type="subunit">
    <text>Heterotrimer of UreA (gamma), UreB (beta) and UreC (alpha) subunits. Three heterotrimers associate to form the active enzyme.</text>
</comment>
<comment type="subcellular location">
    <subcellularLocation>
        <location evidence="1">Cytoplasm</location>
    </subcellularLocation>
</comment>
<comment type="PTM">
    <text evidence="1">Carboxylation allows a single lysine to coordinate two nickel ions.</text>
</comment>
<comment type="miscellaneous">
    <text>Was identified as a high-confidence drug target.</text>
</comment>
<comment type="similarity">
    <text evidence="1">Belongs to the metallo-dependent hydrolases superfamily. Urease alpha subunit family.</text>
</comment>
<gene>
    <name evidence="1" type="primary">ureC</name>
    <name type="ordered locus">Rv1850</name>
    <name type="ORF">MTCY359.23c</name>
</gene>
<feature type="initiator methionine" description="Removed" evidence="2">
    <location>
        <position position="1"/>
    </location>
</feature>
<feature type="chain" id="PRO_0000067549" description="Urease subunit alpha">
    <location>
        <begin position="2"/>
        <end position="577"/>
    </location>
</feature>
<feature type="domain" description="Urease" evidence="1">
    <location>
        <begin position="136"/>
        <end position="577"/>
    </location>
</feature>
<feature type="active site" description="Proton donor" evidence="1">
    <location>
        <position position="327"/>
    </location>
</feature>
<feature type="binding site" evidence="1">
    <location>
        <position position="141"/>
    </location>
    <ligand>
        <name>Ni(2+)</name>
        <dbReference type="ChEBI" id="CHEBI:49786"/>
        <label>1</label>
    </ligand>
</feature>
<feature type="binding site" evidence="1">
    <location>
        <position position="143"/>
    </location>
    <ligand>
        <name>Ni(2+)</name>
        <dbReference type="ChEBI" id="CHEBI:49786"/>
        <label>1</label>
    </ligand>
</feature>
<feature type="binding site" description="via carbamate group" evidence="1">
    <location>
        <position position="224"/>
    </location>
    <ligand>
        <name>Ni(2+)</name>
        <dbReference type="ChEBI" id="CHEBI:49786"/>
        <label>1</label>
    </ligand>
</feature>
<feature type="binding site" description="via carbamate group" evidence="1">
    <location>
        <position position="224"/>
    </location>
    <ligand>
        <name>Ni(2+)</name>
        <dbReference type="ChEBI" id="CHEBI:49786"/>
        <label>2</label>
    </ligand>
</feature>
<feature type="binding site" evidence="1">
    <location>
        <position position="226"/>
    </location>
    <ligand>
        <name>substrate</name>
    </ligand>
</feature>
<feature type="binding site">
    <location>
        <position position="253"/>
    </location>
    <ligand>
        <name>Ni(2+)</name>
        <dbReference type="ChEBI" id="CHEBI:49786"/>
        <label>2</label>
    </ligand>
</feature>
<feature type="binding site" evidence="1">
    <location>
        <position position="279"/>
    </location>
    <ligand>
        <name>Ni(2+)</name>
        <dbReference type="ChEBI" id="CHEBI:49786"/>
        <label>2</label>
    </ligand>
</feature>
<feature type="binding site" evidence="1">
    <location>
        <position position="367"/>
    </location>
    <ligand>
        <name>Ni(2+)</name>
        <dbReference type="ChEBI" id="CHEBI:49786"/>
        <label>1</label>
    </ligand>
</feature>
<feature type="modified residue" description="N6-carboxylysine" evidence="1">
    <location>
        <position position="224"/>
    </location>
</feature>
<feature type="sequence conflict" description="In Ref. 2; AAC37007." evidence="3" ref="2">
    <original>G</original>
    <variation>A</variation>
    <location>
        <position position="62"/>
    </location>
</feature>
<feature type="sequence conflict" description="In Ref. 2; AAC37007." evidence="3" ref="2">
    <original>A</original>
    <variation>T</variation>
    <location>
        <position position="67"/>
    </location>
</feature>
<feature type="sequence conflict" description="In Ref. 2; AAC37007." evidence="3" ref="2">
    <original>A</original>
    <variation>T</variation>
    <location>
        <position position="89"/>
    </location>
</feature>
<feature type="sequence conflict" description="In Ref. 2; AAC37007." evidence="3" ref="2">
    <original>GR</original>
    <variation>AP</variation>
    <location>
        <begin position="96"/>
        <end position="97"/>
    </location>
</feature>
<feature type="sequence conflict" description="In Ref. 2; AAC37007." evidence="3" ref="2">
    <original>A</original>
    <variation>T</variation>
    <location>
        <position position="104"/>
    </location>
</feature>
<feature type="sequence conflict" description="In Ref. 2; AAC37007." evidence="3" ref="2">
    <original>A</original>
    <variation>T</variation>
    <location>
        <position position="153"/>
    </location>
</feature>
<feature type="sequence conflict" description="In Ref. 2; AAC37007." evidence="3" ref="2">
    <original>A</original>
    <variation>T</variation>
    <location>
        <position position="174"/>
    </location>
</feature>
<feature type="sequence conflict" description="In Ref. 2; AAC37007." evidence="3" ref="2">
    <original>G</original>
    <variation>D</variation>
    <location>
        <position position="372"/>
    </location>
</feature>
<feature type="sequence conflict" description="In Ref. 2; AAC37007." evidence="3" ref="2">
    <original>A</original>
    <variation>V</variation>
    <location>
        <position position="448"/>
    </location>
</feature>
<sequence length="577" mass="60825">MARLSRERYAQLYGPTTGDRIRLADTNLLVEVTEDRCGGPGLAGDEAVFGGGKVLRESMGQGRASRADGAPDTVITGAVIIDYWGIIKADIGIRDGRIVGIGKAGNPDIMTGVHRDLVVGPSTEIISGNRRIVTAGTVDCHVHLICPQIIVEALAAGTTTIIGGGTGPAEGTKATTVTPGEWHLARMLESLDGWPVNFALLGKGNTVNPDALWEQLRGGASGFKLHEDWGSTPAAIDTCLAVADVAGVQVALHSDTLNETGFVEDTIGAIAGRSIHAYHTEGAGGGHAPDIITVAAQPNVLPSSTNPTRPHTVNTLDEHLDMLMVCHHLNPRIPEDLAFAESRIRPSTIAAEDVLHDMGAISMIGSDSQAMGRVGEVVLRTWQTAHVMKARRGALEGDPSGSQAADNNRVRRYIAKYTICPAIAHGMDHLIGSVEVGKLADLVLWEPAFFGVRPHVVLKGGAIAWAAMGDANASIPTPQPVLPRPMFGAAAATAAATSVHFVAPQSIDARLADRLAVNRGLAPVADVRAVGKTDLPLNDALPSIEVDPDTFTVRIDGQVWQPQPAAELPMTQRYFLF</sequence>